<protein>
    <recommendedName>
        <fullName evidence="1">Acetylglutamate kinase</fullName>
        <ecNumber evidence="1">2.7.2.8</ecNumber>
    </recommendedName>
    <alternativeName>
        <fullName evidence="1">N-acetyl-L-glutamate 5-phosphotransferase</fullName>
    </alternativeName>
    <alternativeName>
        <fullName evidence="1">NAG kinase</fullName>
        <shortName evidence="1">NAGK</shortName>
    </alternativeName>
</protein>
<comment type="function">
    <text evidence="1">Catalyzes the ATP-dependent phosphorylation of N-acetyl-L-glutamate.</text>
</comment>
<comment type="catalytic activity">
    <reaction evidence="1">
        <text>N-acetyl-L-glutamate + ATP = N-acetyl-L-glutamyl 5-phosphate + ADP</text>
        <dbReference type="Rhea" id="RHEA:14629"/>
        <dbReference type="ChEBI" id="CHEBI:30616"/>
        <dbReference type="ChEBI" id="CHEBI:44337"/>
        <dbReference type="ChEBI" id="CHEBI:57936"/>
        <dbReference type="ChEBI" id="CHEBI:456216"/>
        <dbReference type="EC" id="2.7.2.8"/>
    </reaction>
</comment>
<comment type="pathway">
    <text evidence="1">Amino-acid biosynthesis; L-arginine biosynthesis; N(2)-acetyl-L-ornithine from L-glutamate: step 2/4.</text>
</comment>
<comment type="subunit">
    <text evidence="1">Homodimer.</text>
</comment>
<comment type="subcellular location">
    <subcellularLocation>
        <location evidence="1">Cytoplasm</location>
    </subcellularLocation>
</comment>
<comment type="similarity">
    <text evidence="1">Belongs to the acetylglutamate kinase family. ArgB subfamily.</text>
</comment>
<comment type="sequence caution" evidence="2">
    <conflict type="erroneous initiation">
        <sequence resource="EMBL-CDS" id="AAN45466"/>
    </conflict>
    <text>Truncated N-terminus.</text>
</comment>
<comment type="sequence caution" evidence="2">
    <conflict type="erroneous initiation">
        <sequence resource="EMBL-CDS" id="AAP18736"/>
    </conflict>
    <text>Truncated N-terminus.</text>
</comment>
<gene>
    <name evidence="1" type="primary">argB</name>
    <name type="ordered locus">SF4036</name>
    <name type="ordered locus">S3710</name>
</gene>
<organism>
    <name type="scientific">Shigella flexneri</name>
    <dbReference type="NCBI Taxonomy" id="623"/>
    <lineage>
        <taxon>Bacteria</taxon>
        <taxon>Pseudomonadati</taxon>
        <taxon>Pseudomonadota</taxon>
        <taxon>Gammaproteobacteria</taxon>
        <taxon>Enterobacterales</taxon>
        <taxon>Enterobacteriaceae</taxon>
        <taxon>Shigella</taxon>
    </lineage>
</organism>
<feature type="chain" id="PRO_0000112661" description="Acetylglutamate kinase">
    <location>
        <begin position="1"/>
        <end position="258"/>
    </location>
</feature>
<feature type="binding site" evidence="1">
    <location>
        <begin position="44"/>
        <end position="45"/>
    </location>
    <ligand>
        <name>substrate</name>
    </ligand>
</feature>
<feature type="binding site" evidence="1">
    <location>
        <position position="66"/>
    </location>
    <ligand>
        <name>substrate</name>
    </ligand>
</feature>
<feature type="binding site" evidence="1">
    <location>
        <position position="158"/>
    </location>
    <ligand>
        <name>substrate</name>
    </ligand>
</feature>
<feature type="binding site" evidence="1">
    <location>
        <begin position="181"/>
        <end position="186"/>
    </location>
    <ligand>
        <name>ATP</name>
        <dbReference type="ChEBI" id="CHEBI:30616"/>
    </ligand>
</feature>
<feature type="binding site" evidence="1">
    <location>
        <begin position="209"/>
        <end position="211"/>
    </location>
    <ligand>
        <name>ATP</name>
        <dbReference type="ChEBI" id="CHEBI:30616"/>
    </ligand>
</feature>
<feature type="site" description="Transition state stabilizer" evidence="1">
    <location>
        <position position="8"/>
    </location>
</feature>
<feature type="site" description="Transition state stabilizer" evidence="1">
    <location>
        <position position="217"/>
    </location>
</feature>
<name>ARGB_SHIFL</name>
<proteinExistence type="inferred from homology"/>
<keyword id="KW-0028">Amino-acid biosynthesis</keyword>
<keyword id="KW-0055">Arginine biosynthesis</keyword>
<keyword id="KW-0067">ATP-binding</keyword>
<keyword id="KW-0963">Cytoplasm</keyword>
<keyword id="KW-0418">Kinase</keyword>
<keyword id="KW-0547">Nucleotide-binding</keyword>
<keyword id="KW-1185">Reference proteome</keyword>
<keyword id="KW-0808">Transferase</keyword>
<dbReference type="EC" id="2.7.2.8" evidence="1"/>
<dbReference type="EMBL" id="AE005674">
    <property type="protein sequence ID" value="AAN45466.2"/>
    <property type="status" value="ALT_INIT"/>
    <property type="molecule type" value="Genomic_DNA"/>
</dbReference>
<dbReference type="EMBL" id="AE014073">
    <property type="protein sequence ID" value="AAP18736.1"/>
    <property type="status" value="ALT_INIT"/>
    <property type="molecule type" value="Genomic_DNA"/>
</dbReference>
<dbReference type="RefSeq" id="NP_709759.2">
    <property type="nucleotide sequence ID" value="NC_004337.2"/>
</dbReference>
<dbReference type="SMR" id="P59302"/>
<dbReference type="STRING" id="198214.SF4036"/>
<dbReference type="PaxDb" id="198214-SF4036"/>
<dbReference type="GeneID" id="1025157"/>
<dbReference type="KEGG" id="sfl:SF4036"/>
<dbReference type="KEGG" id="sfx:S3710"/>
<dbReference type="PATRIC" id="fig|198214.7.peg.4758"/>
<dbReference type="HOGENOM" id="CLU_053680_1_1_6"/>
<dbReference type="UniPathway" id="UPA00068">
    <property type="reaction ID" value="UER00107"/>
</dbReference>
<dbReference type="Proteomes" id="UP000001006">
    <property type="component" value="Chromosome"/>
</dbReference>
<dbReference type="Proteomes" id="UP000002673">
    <property type="component" value="Chromosome"/>
</dbReference>
<dbReference type="GO" id="GO:0005737">
    <property type="term" value="C:cytoplasm"/>
    <property type="evidence" value="ECO:0007669"/>
    <property type="project" value="UniProtKB-SubCell"/>
</dbReference>
<dbReference type="GO" id="GO:0003991">
    <property type="term" value="F:acetylglutamate kinase activity"/>
    <property type="evidence" value="ECO:0007669"/>
    <property type="project" value="UniProtKB-UniRule"/>
</dbReference>
<dbReference type="GO" id="GO:0005524">
    <property type="term" value="F:ATP binding"/>
    <property type="evidence" value="ECO:0007669"/>
    <property type="project" value="UniProtKB-UniRule"/>
</dbReference>
<dbReference type="GO" id="GO:0042450">
    <property type="term" value="P:arginine biosynthetic process via ornithine"/>
    <property type="evidence" value="ECO:0007669"/>
    <property type="project" value="UniProtKB-UniRule"/>
</dbReference>
<dbReference type="GO" id="GO:0006526">
    <property type="term" value="P:L-arginine biosynthetic process"/>
    <property type="evidence" value="ECO:0007669"/>
    <property type="project" value="UniProtKB-UniPathway"/>
</dbReference>
<dbReference type="CDD" id="cd04249">
    <property type="entry name" value="AAK_NAGK-NC"/>
    <property type="match status" value="1"/>
</dbReference>
<dbReference type="FunFam" id="3.40.1160.10:FF:000008">
    <property type="entry name" value="Acetylglutamate kinase"/>
    <property type="match status" value="1"/>
</dbReference>
<dbReference type="Gene3D" id="3.40.1160.10">
    <property type="entry name" value="Acetylglutamate kinase-like"/>
    <property type="match status" value="1"/>
</dbReference>
<dbReference type="HAMAP" id="MF_00082">
    <property type="entry name" value="ArgB"/>
    <property type="match status" value="1"/>
</dbReference>
<dbReference type="InterPro" id="IPR036393">
    <property type="entry name" value="AceGlu_kinase-like_sf"/>
</dbReference>
<dbReference type="InterPro" id="IPR004662">
    <property type="entry name" value="AcgluKinase_fam"/>
</dbReference>
<dbReference type="InterPro" id="IPR037528">
    <property type="entry name" value="ArgB"/>
</dbReference>
<dbReference type="InterPro" id="IPR001048">
    <property type="entry name" value="Asp/Glu/Uridylate_kinase"/>
</dbReference>
<dbReference type="InterPro" id="IPR041731">
    <property type="entry name" value="NAGK-NC"/>
</dbReference>
<dbReference type="NCBIfam" id="TIGR00761">
    <property type="entry name" value="argB"/>
    <property type="match status" value="1"/>
</dbReference>
<dbReference type="PANTHER" id="PTHR23342">
    <property type="entry name" value="N-ACETYLGLUTAMATE SYNTHASE"/>
    <property type="match status" value="1"/>
</dbReference>
<dbReference type="PANTHER" id="PTHR23342:SF0">
    <property type="entry name" value="N-ACETYLGLUTAMATE SYNTHASE, MITOCHONDRIAL"/>
    <property type="match status" value="1"/>
</dbReference>
<dbReference type="Pfam" id="PF00696">
    <property type="entry name" value="AA_kinase"/>
    <property type="match status" value="1"/>
</dbReference>
<dbReference type="PIRSF" id="PIRSF000728">
    <property type="entry name" value="NAGK"/>
    <property type="match status" value="1"/>
</dbReference>
<dbReference type="SUPFAM" id="SSF53633">
    <property type="entry name" value="Carbamate kinase-like"/>
    <property type="match status" value="1"/>
</dbReference>
<sequence length="258" mass="27186">MMNPLIIKLGGVLLDSEEALERLFSALVNYRESHQRPLVIVHGGGCVVDELMKGLNLPVKKKNGLRVTPADQIDIITGALAGTANKTLLAWAKKHQIAAVGLFLGDGDSVKVTQLDEELGHVGLAQPGSPKLINSLLENGYLPVVSSIGVTDEGQLMNVNADQAATALAATLGADLILLSDVSGILDGKGQRIAEMTAAKAEQLIEQGIITDGMIVKVNAALDAARTLGRPVDIASWRYAEQLPALFNGMPMGTRILA</sequence>
<accession>P59302</accession>
<reference key="1">
    <citation type="journal article" date="2002" name="Nucleic Acids Res.">
        <title>Genome sequence of Shigella flexneri 2a: insights into pathogenicity through comparison with genomes of Escherichia coli K12 and O157.</title>
        <authorList>
            <person name="Jin Q."/>
            <person name="Yuan Z."/>
            <person name="Xu J."/>
            <person name="Wang Y."/>
            <person name="Shen Y."/>
            <person name="Lu W."/>
            <person name="Wang J."/>
            <person name="Liu H."/>
            <person name="Yang J."/>
            <person name="Yang F."/>
            <person name="Zhang X."/>
            <person name="Zhang J."/>
            <person name="Yang G."/>
            <person name="Wu H."/>
            <person name="Qu D."/>
            <person name="Dong J."/>
            <person name="Sun L."/>
            <person name="Xue Y."/>
            <person name="Zhao A."/>
            <person name="Gao Y."/>
            <person name="Zhu J."/>
            <person name="Kan B."/>
            <person name="Ding K."/>
            <person name="Chen S."/>
            <person name="Cheng H."/>
            <person name="Yao Z."/>
            <person name="He B."/>
            <person name="Chen R."/>
            <person name="Ma D."/>
            <person name="Qiang B."/>
            <person name="Wen Y."/>
            <person name="Hou Y."/>
            <person name="Yu J."/>
        </authorList>
    </citation>
    <scope>NUCLEOTIDE SEQUENCE [LARGE SCALE GENOMIC DNA]</scope>
    <source>
        <strain>301 / Serotype 2a</strain>
    </source>
</reference>
<reference key="2">
    <citation type="journal article" date="2003" name="Infect. Immun.">
        <title>Complete genome sequence and comparative genomics of Shigella flexneri serotype 2a strain 2457T.</title>
        <authorList>
            <person name="Wei J."/>
            <person name="Goldberg M.B."/>
            <person name="Burland V."/>
            <person name="Venkatesan M.M."/>
            <person name="Deng W."/>
            <person name="Fournier G."/>
            <person name="Mayhew G.F."/>
            <person name="Plunkett G. III"/>
            <person name="Rose D.J."/>
            <person name="Darling A."/>
            <person name="Mau B."/>
            <person name="Perna N.T."/>
            <person name="Payne S.M."/>
            <person name="Runyen-Janecky L.J."/>
            <person name="Zhou S."/>
            <person name="Schwartz D.C."/>
            <person name="Blattner F.R."/>
        </authorList>
    </citation>
    <scope>NUCLEOTIDE SEQUENCE [LARGE SCALE GENOMIC DNA]</scope>
    <source>
        <strain>ATCC 700930 / 2457T / Serotype 2a</strain>
    </source>
</reference>
<evidence type="ECO:0000255" key="1">
    <source>
        <dbReference type="HAMAP-Rule" id="MF_00082"/>
    </source>
</evidence>
<evidence type="ECO:0000305" key="2"/>